<dbReference type="EC" id="3.6.4.-" evidence="2"/>
<dbReference type="EMBL" id="X52602">
    <property type="protein sequence ID" value="CAA36835.1"/>
    <property type="molecule type" value="mRNA"/>
</dbReference>
<dbReference type="PIR" id="S11450">
    <property type="entry name" value="S11450"/>
</dbReference>
<dbReference type="SMR" id="P18600"/>
<dbReference type="GO" id="GO:0005737">
    <property type="term" value="C:cytoplasm"/>
    <property type="evidence" value="ECO:0007669"/>
    <property type="project" value="UniProtKB-KW"/>
</dbReference>
<dbReference type="GO" id="GO:0005856">
    <property type="term" value="C:cytoskeleton"/>
    <property type="evidence" value="ECO:0007669"/>
    <property type="project" value="UniProtKB-SubCell"/>
</dbReference>
<dbReference type="GO" id="GO:0005524">
    <property type="term" value="F:ATP binding"/>
    <property type="evidence" value="ECO:0007669"/>
    <property type="project" value="UniProtKB-KW"/>
</dbReference>
<dbReference type="GO" id="GO:0016787">
    <property type="term" value="F:hydrolase activity"/>
    <property type="evidence" value="ECO:0007669"/>
    <property type="project" value="UniProtKB-KW"/>
</dbReference>
<dbReference type="CDD" id="cd10224">
    <property type="entry name" value="ASKHA_NBD_actin"/>
    <property type="match status" value="1"/>
</dbReference>
<dbReference type="FunFam" id="3.30.420.40:FF:000131">
    <property type="entry name" value="Actin, alpha skeletal muscle"/>
    <property type="match status" value="1"/>
</dbReference>
<dbReference type="FunFam" id="3.30.420.40:FF:000291">
    <property type="entry name" value="Actin, alpha skeletal muscle"/>
    <property type="match status" value="1"/>
</dbReference>
<dbReference type="FunFam" id="3.90.640.10:FF:000047">
    <property type="entry name" value="Actin, alpha skeletal muscle"/>
    <property type="match status" value="1"/>
</dbReference>
<dbReference type="FunFam" id="3.30.420.40:FF:000058">
    <property type="entry name" value="Putative actin-related protein 5"/>
    <property type="match status" value="1"/>
</dbReference>
<dbReference type="Gene3D" id="3.30.420.40">
    <property type="match status" value="2"/>
</dbReference>
<dbReference type="Gene3D" id="3.90.640.10">
    <property type="entry name" value="Actin, Chain A, domain 4"/>
    <property type="match status" value="1"/>
</dbReference>
<dbReference type="InterPro" id="IPR004000">
    <property type="entry name" value="Actin"/>
</dbReference>
<dbReference type="InterPro" id="IPR020902">
    <property type="entry name" value="Actin/actin-like_CS"/>
</dbReference>
<dbReference type="InterPro" id="IPR004001">
    <property type="entry name" value="Actin_CS"/>
</dbReference>
<dbReference type="InterPro" id="IPR043129">
    <property type="entry name" value="ATPase_NBD"/>
</dbReference>
<dbReference type="PANTHER" id="PTHR11937">
    <property type="entry name" value="ACTIN"/>
    <property type="match status" value="1"/>
</dbReference>
<dbReference type="Pfam" id="PF00022">
    <property type="entry name" value="Actin"/>
    <property type="match status" value="1"/>
</dbReference>
<dbReference type="PRINTS" id="PR00190">
    <property type="entry name" value="ACTIN"/>
</dbReference>
<dbReference type="SMART" id="SM00268">
    <property type="entry name" value="ACTIN"/>
    <property type="match status" value="1"/>
</dbReference>
<dbReference type="SUPFAM" id="SSF53067">
    <property type="entry name" value="Actin-like ATPase domain"/>
    <property type="match status" value="2"/>
</dbReference>
<dbReference type="PROSITE" id="PS00406">
    <property type="entry name" value="ACTINS_1"/>
    <property type="match status" value="1"/>
</dbReference>
<dbReference type="PROSITE" id="PS00432">
    <property type="entry name" value="ACTINS_2"/>
    <property type="match status" value="1"/>
</dbReference>
<dbReference type="PROSITE" id="PS01132">
    <property type="entry name" value="ACTINS_ACT_LIKE"/>
    <property type="match status" value="1"/>
</dbReference>
<accession>P18600</accession>
<keyword id="KW-0007">Acetylation</keyword>
<keyword id="KW-0067">ATP-binding</keyword>
<keyword id="KW-0963">Cytoplasm</keyword>
<keyword id="KW-0206">Cytoskeleton</keyword>
<keyword id="KW-0378">Hydrolase</keyword>
<keyword id="KW-0547">Nucleotide-binding</keyword>
<keyword id="KW-0558">Oxidation</keyword>
<sequence length="376" mass="41786">MCDDEVAALVVDNGSGMCKAGFAGDDAPRAVFPSIVGRPRHQGVMVGMGQKDSYVGDEAQSKRGILTLKYPIEHGIITNWDDMEKIWHHTFYNELRVAPEEHPILLTEAPLNPKANREKMTQIMFETFNSPAMYVAIQAVLSLYASGRTTGVVLDSGDGVSHTVPIYEGYALPHAILRLDLAGRDLTDYLMKILTERGYSFTTTAEREIVRDIKEKLCYVALDFEQEMATAAASTSLEKSYELPDGQVLTIGNERFRCPEALFQPSFLGMESCGIHETVYNTIMKCDVDIRKDLYANTVLSGGTTMYPGIADRMQKEITALAPSTIKIKIIAPPERKYSVWIGGSILASLSTFQQMWISKQEYDESGPGIVHRKCF</sequence>
<feature type="propeptide" id="PRO_0000000610" description="Removed in mature form" evidence="1">
    <location>
        <begin position="1"/>
        <end position="2"/>
    </location>
</feature>
<feature type="chain" id="PRO_0000000611" description="Actin, clone 205">
    <location>
        <begin position="3"/>
        <end position="376"/>
    </location>
</feature>
<feature type="modified residue" description="N-acetylaspartate" evidence="1">
    <location>
        <position position="3"/>
    </location>
</feature>
<feature type="modified residue" description="Methionine sulfoxide" evidence="1">
    <location>
        <position position="45"/>
    </location>
</feature>
<feature type="modified residue" description="Methionine sulfoxide" evidence="1">
    <location>
        <position position="48"/>
    </location>
</feature>
<proteinExistence type="evidence at transcript level"/>
<protein>
    <recommendedName>
        <fullName>Actin, clone 205</fullName>
        <ecNumber evidence="2">3.6.4.-</ecNumber>
    </recommendedName>
</protein>
<name>ACT1_ARTSX</name>
<comment type="function">
    <text>Actins are highly conserved proteins that are involved in various types of cell motility and are ubiquitously expressed in all eukaryotic cells.</text>
</comment>
<comment type="function">
    <text>Multiple isoforms are involved in various cellular functions such as cytoskeleton structure, cell mobility, chromosome movement and muscle contraction.</text>
</comment>
<comment type="catalytic activity">
    <reaction evidence="2">
        <text>ATP + H2O = ADP + phosphate + H(+)</text>
        <dbReference type="Rhea" id="RHEA:13065"/>
        <dbReference type="ChEBI" id="CHEBI:15377"/>
        <dbReference type="ChEBI" id="CHEBI:15378"/>
        <dbReference type="ChEBI" id="CHEBI:30616"/>
        <dbReference type="ChEBI" id="CHEBI:43474"/>
        <dbReference type="ChEBI" id="CHEBI:456216"/>
    </reaction>
</comment>
<comment type="subcellular location">
    <subcellularLocation>
        <location>Cytoplasm</location>
        <location>Cytoskeleton</location>
    </subcellularLocation>
</comment>
<comment type="PTM">
    <text evidence="1">Oxidation of Met-45 to form methionine sulfoxide promotes actin filament depolymerization. Methionine sulfoxide is produced stereospecifically, but it is not known whether the (S)-S-oxide or the (R)-S-oxide is produced (By similarity).</text>
</comment>
<comment type="miscellaneous">
    <text>There are at least 4 actin isoforms expressed during artemia development.</text>
</comment>
<comment type="similarity">
    <text evidence="3">Belongs to the actin family.</text>
</comment>
<evidence type="ECO:0000250" key="1"/>
<evidence type="ECO:0000250" key="2">
    <source>
        <dbReference type="UniProtKB" id="P68137"/>
    </source>
</evidence>
<evidence type="ECO:0000305" key="3"/>
<reference key="1">
    <citation type="journal article" date="1990" name="Nucleic Acids Res.">
        <title>Molecular cloning and expression of four actin isoforms during Artemia development.</title>
        <authorList>
            <person name="Macias M.-T."/>
            <person name="Sastre L."/>
        </authorList>
    </citation>
    <scope>NUCLEOTIDE SEQUENCE [MRNA]</scope>
</reference>
<organism>
    <name type="scientific">Artemia sp.</name>
    <name type="common">Brine shrimp</name>
    <dbReference type="NCBI Taxonomy" id="6662"/>
    <lineage>
        <taxon>Eukaryota</taxon>
        <taxon>Metazoa</taxon>
        <taxon>Ecdysozoa</taxon>
        <taxon>Arthropoda</taxon>
        <taxon>Crustacea</taxon>
        <taxon>Branchiopoda</taxon>
        <taxon>Anostraca</taxon>
        <taxon>Artemiidae</taxon>
        <taxon>Artemia</taxon>
    </lineage>
</organism>